<proteinExistence type="inferred from homology"/>
<sequence length="296" mass="32031">MLYEQIQSNKRRTVFLLIGFLALVGIVGAAVGYLLLKSLVTGIIGALLVGVIYAVIMISNATDVVMAMNHGTEVTSADQAPELWHTVEDMAMVAQVPMPRVFIIEDESPNAFATGNNPKNAAVAATTGLIALMNRNELEGVIGHEISHVRNYDIRISTIALALTAAISFLINLGSNWWLFGSGSRDRDNRDSGGGGQLLVFILSLVVMIFAPLVAAVIQMAISRNREYLADAGSVALTRNPQELIAALRKLNSAPPMSHVDESSAALYISDPLKKKARLFDTHPPIEERIARLEKM</sequence>
<feature type="chain" id="PRO_1000098826" description="Protease HtpX homolog">
    <location>
        <begin position="1"/>
        <end position="296"/>
    </location>
</feature>
<feature type="transmembrane region" description="Helical" evidence="1">
    <location>
        <begin position="14"/>
        <end position="34"/>
    </location>
</feature>
<feature type="transmembrane region" description="Helical" evidence="1">
    <location>
        <begin position="38"/>
        <end position="58"/>
    </location>
</feature>
<feature type="transmembrane region" description="Helical" evidence="1">
    <location>
        <begin position="159"/>
        <end position="179"/>
    </location>
</feature>
<feature type="transmembrane region" description="Helical" evidence="1">
    <location>
        <begin position="198"/>
        <end position="218"/>
    </location>
</feature>
<feature type="active site" evidence="1">
    <location>
        <position position="145"/>
    </location>
</feature>
<feature type="binding site" evidence="1">
    <location>
        <position position="144"/>
    </location>
    <ligand>
        <name>Zn(2+)</name>
        <dbReference type="ChEBI" id="CHEBI:29105"/>
        <note>catalytic</note>
    </ligand>
</feature>
<feature type="binding site" evidence="1">
    <location>
        <position position="148"/>
    </location>
    <ligand>
        <name>Zn(2+)</name>
        <dbReference type="ChEBI" id="CHEBI:29105"/>
        <note>catalytic</note>
    </ligand>
</feature>
<feature type="binding site" evidence="1">
    <location>
        <position position="227"/>
    </location>
    <ligand>
        <name>Zn(2+)</name>
        <dbReference type="ChEBI" id="CHEBI:29105"/>
        <note>catalytic</note>
    </ligand>
</feature>
<accession>B1MY16</accession>
<keyword id="KW-1003">Cell membrane</keyword>
<keyword id="KW-0378">Hydrolase</keyword>
<keyword id="KW-0472">Membrane</keyword>
<keyword id="KW-0479">Metal-binding</keyword>
<keyword id="KW-0482">Metalloprotease</keyword>
<keyword id="KW-0645">Protease</keyword>
<keyword id="KW-1185">Reference proteome</keyword>
<keyword id="KW-0812">Transmembrane</keyword>
<keyword id="KW-1133">Transmembrane helix</keyword>
<keyword id="KW-0862">Zinc</keyword>
<organism>
    <name type="scientific">Leuconostoc citreum (strain KM20)</name>
    <dbReference type="NCBI Taxonomy" id="349519"/>
    <lineage>
        <taxon>Bacteria</taxon>
        <taxon>Bacillati</taxon>
        <taxon>Bacillota</taxon>
        <taxon>Bacilli</taxon>
        <taxon>Lactobacillales</taxon>
        <taxon>Lactobacillaceae</taxon>
        <taxon>Leuconostoc</taxon>
    </lineage>
</organism>
<dbReference type="EC" id="3.4.24.-" evidence="1"/>
<dbReference type="EMBL" id="DQ489736">
    <property type="protein sequence ID" value="ACA82418.1"/>
    <property type="molecule type" value="Genomic_DNA"/>
</dbReference>
<dbReference type="RefSeq" id="WP_004900296.1">
    <property type="nucleotide sequence ID" value="NC_010471.1"/>
</dbReference>
<dbReference type="STRING" id="349519.LCK_00585"/>
<dbReference type="GeneID" id="61102483"/>
<dbReference type="KEGG" id="lci:LCK_00585"/>
<dbReference type="eggNOG" id="COG0501">
    <property type="taxonomic scope" value="Bacteria"/>
</dbReference>
<dbReference type="HOGENOM" id="CLU_042266_2_1_9"/>
<dbReference type="OrthoDB" id="15218at2"/>
<dbReference type="Proteomes" id="UP000002166">
    <property type="component" value="Chromosome"/>
</dbReference>
<dbReference type="GO" id="GO:0005886">
    <property type="term" value="C:plasma membrane"/>
    <property type="evidence" value="ECO:0007669"/>
    <property type="project" value="UniProtKB-SubCell"/>
</dbReference>
<dbReference type="GO" id="GO:0004222">
    <property type="term" value="F:metalloendopeptidase activity"/>
    <property type="evidence" value="ECO:0007669"/>
    <property type="project" value="UniProtKB-UniRule"/>
</dbReference>
<dbReference type="GO" id="GO:0008270">
    <property type="term" value="F:zinc ion binding"/>
    <property type="evidence" value="ECO:0007669"/>
    <property type="project" value="UniProtKB-UniRule"/>
</dbReference>
<dbReference type="GO" id="GO:0006508">
    <property type="term" value="P:proteolysis"/>
    <property type="evidence" value="ECO:0007669"/>
    <property type="project" value="UniProtKB-KW"/>
</dbReference>
<dbReference type="CDD" id="cd07340">
    <property type="entry name" value="M48B_Htpx_like"/>
    <property type="match status" value="1"/>
</dbReference>
<dbReference type="Gene3D" id="3.30.2010.10">
    <property type="entry name" value="Metalloproteases ('zincins'), catalytic domain"/>
    <property type="match status" value="1"/>
</dbReference>
<dbReference type="HAMAP" id="MF_00188">
    <property type="entry name" value="Pept_M48_protease_HtpX"/>
    <property type="match status" value="1"/>
</dbReference>
<dbReference type="InterPro" id="IPR050083">
    <property type="entry name" value="HtpX_protease"/>
</dbReference>
<dbReference type="InterPro" id="IPR022919">
    <property type="entry name" value="Pept_M48_protease_HtpX"/>
</dbReference>
<dbReference type="InterPro" id="IPR001915">
    <property type="entry name" value="Peptidase_M48"/>
</dbReference>
<dbReference type="NCBIfam" id="NF003425">
    <property type="entry name" value="PRK04897.1"/>
    <property type="match status" value="1"/>
</dbReference>
<dbReference type="PANTHER" id="PTHR43221">
    <property type="entry name" value="PROTEASE HTPX"/>
    <property type="match status" value="1"/>
</dbReference>
<dbReference type="PANTHER" id="PTHR43221:SF1">
    <property type="entry name" value="PROTEASE HTPX"/>
    <property type="match status" value="1"/>
</dbReference>
<dbReference type="Pfam" id="PF01435">
    <property type="entry name" value="Peptidase_M48"/>
    <property type="match status" value="1"/>
</dbReference>
<gene>
    <name evidence="1" type="primary">htpX</name>
    <name type="ordered locus">LCK_00585</name>
</gene>
<reference key="1">
    <citation type="journal article" date="2008" name="J. Bacteriol.">
        <title>Complete genome sequence of Leuconostoc citreum KM20.</title>
        <authorList>
            <person name="Kim J.F."/>
            <person name="Jeong H."/>
            <person name="Lee J.-S."/>
            <person name="Choi S.-H."/>
            <person name="Ha M."/>
            <person name="Hur C.-G."/>
            <person name="Kim J.-S."/>
            <person name="Lee S."/>
            <person name="Park H.-S."/>
            <person name="Park Y.-H."/>
            <person name="Oh T.K."/>
        </authorList>
    </citation>
    <scope>NUCLEOTIDE SEQUENCE [LARGE SCALE GENOMIC DNA]</scope>
    <source>
        <strain>KM20</strain>
    </source>
</reference>
<comment type="cofactor">
    <cofactor evidence="1">
        <name>Zn(2+)</name>
        <dbReference type="ChEBI" id="CHEBI:29105"/>
    </cofactor>
    <text evidence="1">Binds 1 zinc ion per subunit.</text>
</comment>
<comment type="subcellular location">
    <subcellularLocation>
        <location evidence="1">Cell membrane</location>
        <topology evidence="1">Multi-pass membrane protein</topology>
    </subcellularLocation>
</comment>
<comment type="similarity">
    <text evidence="1">Belongs to the peptidase M48B family.</text>
</comment>
<evidence type="ECO:0000255" key="1">
    <source>
        <dbReference type="HAMAP-Rule" id="MF_00188"/>
    </source>
</evidence>
<protein>
    <recommendedName>
        <fullName evidence="1">Protease HtpX homolog</fullName>
        <ecNumber evidence="1">3.4.24.-</ecNumber>
    </recommendedName>
</protein>
<name>HTPX_LEUCK</name>